<reference key="1">
    <citation type="journal article" date="1996" name="DNA Res.">
        <title>Sequence analysis of the genome of the unicellular cyanobacterium Synechocystis sp. strain PCC6803. II. Sequence determination of the entire genome and assignment of potential protein-coding regions.</title>
        <authorList>
            <person name="Kaneko T."/>
            <person name="Sato S."/>
            <person name="Kotani H."/>
            <person name="Tanaka A."/>
            <person name="Asamizu E."/>
            <person name="Nakamura Y."/>
            <person name="Miyajima N."/>
            <person name="Hirosawa M."/>
            <person name="Sugiura M."/>
            <person name="Sasamoto S."/>
            <person name="Kimura T."/>
            <person name="Hosouchi T."/>
            <person name="Matsuno A."/>
            <person name="Muraki A."/>
            <person name="Nakazaki N."/>
            <person name="Naruo K."/>
            <person name="Okumura S."/>
            <person name="Shimpo S."/>
            <person name="Takeuchi C."/>
            <person name="Wada T."/>
            <person name="Watanabe A."/>
            <person name="Yamada M."/>
            <person name="Yasuda M."/>
            <person name="Tabata S."/>
        </authorList>
    </citation>
    <scope>NUCLEOTIDE SEQUENCE [LARGE SCALE GENOMIC DNA]</scope>
    <source>
        <strain>ATCC 27184 / PCC 6803 / Kazusa</strain>
    </source>
</reference>
<reference evidence="7" key="2">
    <citation type="journal article" date="2015" name="FEBS Lett.">
        <title>Structure-directed construction of a high-performance version of the enzyme FabG from the photosynthetic microorganism Synechocystis sp. PCC 6803.</title>
        <authorList>
            <person name="Liu Y."/>
            <person name="Feng Y."/>
            <person name="Cao X."/>
            <person name="Li X."/>
            <person name="Xue S."/>
        </authorList>
    </citation>
    <scope>X-RAY CRYSTALLOGRAPHY (2.20 ANGSTROMS)</scope>
    <scope>FUNCTION</scope>
    <scope>BIOTECHNOLOGY</scope>
    <scope>MUTAGENESIS OF ALA-14; PRO-151; LYS-160; PHE-188 AND ASN-198</scope>
</reference>
<evidence type="ECO:0000250" key="1"/>
<evidence type="ECO:0000255" key="2">
    <source>
        <dbReference type="PROSITE-ProRule" id="PRU10001"/>
    </source>
</evidence>
<evidence type="ECO:0000269" key="3">
    <source>
    </source>
</evidence>
<evidence type="ECO:0000303" key="4">
    <source>
    </source>
</evidence>
<evidence type="ECO:0000305" key="5"/>
<evidence type="ECO:0000305" key="6">
    <source>
    </source>
</evidence>
<evidence type="ECO:0007744" key="7">
    <source>
        <dbReference type="PDB" id="4RZH"/>
    </source>
</evidence>
<evidence type="ECO:0007829" key="8">
    <source>
        <dbReference type="PDB" id="4RZH"/>
    </source>
</evidence>
<proteinExistence type="evidence at protein level"/>
<sequence length="247" mass="25724">MTALTAQVALVTGASRGIGKATALALAATGMKVVVNYAQSSTAADAVVAEIIANGGEAIAVQANVANADEVDQLIKTTLDKFSRIDVLVNNAGITRDTLLLRMKLEDWQAVIDLNLTGVFLCTKAVSKLMLKQKSGRIINITSVAGMMGNPGQANYSAAKAGVIGFTKTVAKELASRGVTVNAVAPGFIATDMTENLNAEPILQFIPLARYGQPEEVAGTIRFLATDPAAAYITGQTFNVDGGMVMF</sequence>
<feature type="chain" id="PRO_0000054691" description="3-oxoacyl-[acyl-carrier-protein] reductase">
    <location>
        <begin position="1"/>
        <end position="247"/>
    </location>
</feature>
<feature type="active site" description="Proton acceptor" evidence="2">
    <location>
        <position position="156"/>
    </location>
</feature>
<feature type="binding site" evidence="1">
    <location>
        <begin position="11"/>
        <end position="35"/>
    </location>
    <ligand>
        <name>NADP(+)</name>
        <dbReference type="ChEBI" id="CHEBI:58349"/>
    </ligand>
</feature>
<feature type="binding site" evidence="1">
    <location>
        <position position="143"/>
    </location>
    <ligand>
        <name>substrate</name>
    </ligand>
</feature>
<feature type="mutagenesis site" description="4.2-fold increase in activity on acetoacetyl-CoA." evidence="3">
    <original>A</original>
    <variation>G</variation>
    <location>
        <position position="14"/>
    </location>
</feature>
<feature type="mutagenesis site" description="2.7-fold increase in activity on acetoacetyl-CoA." evidence="3">
    <original>P</original>
    <variation>F</variation>
    <location>
        <position position="151"/>
    </location>
</feature>
<feature type="mutagenesis site" description="5.7-fold increase in activity on acetoacetyl-CoA." evidence="3">
    <original>P</original>
    <variation>V</variation>
    <location>
        <position position="151"/>
    </location>
</feature>
<feature type="mutagenesis site" description="Almost no activity on acetoacetyl-CoA." evidence="3">
    <original>K</original>
    <variation>A</variation>
    <location>
        <position position="160"/>
    </location>
</feature>
<feature type="mutagenesis site" description="3.3-fold increase in activity on acetoacetyl-CoA." evidence="3">
    <original>F</original>
    <variation>Y</variation>
    <location>
        <position position="188"/>
    </location>
</feature>
<feature type="mutagenesis site" description="3.5-fold increase in activity on acetoacetyl-CoA." evidence="3">
    <original>N</original>
    <variation>R</variation>
    <location>
        <position position="198"/>
    </location>
</feature>
<feature type="helix" evidence="8">
    <location>
        <begin position="4"/>
        <end position="6"/>
    </location>
</feature>
<feature type="strand" evidence="8">
    <location>
        <begin position="8"/>
        <end position="13"/>
    </location>
</feature>
<feature type="helix" evidence="8">
    <location>
        <begin position="17"/>
        <end position="28"/>
    </location>
</feature>
<feature type="strand" evidence="8">
    <location>
        <begin position="32"/>
        <end position="39"/>
    </location>
</feature>
<feature type="helix" evidence="8">
    <location>
        <begin position="41"/>
        <end position="53"/>
    </location>
</feature>
<feature type="strand" evidence="8">
    <location>
        <begin position="57"/>
        <end position="62"/>
    </location>
</feature>
<feature type="helix" evidence="8">
    <location>
        <begin position="68"/>
        <end position="82"/>
    </location>
</feature>
<feature type="strand" evidence="8">
    <location>
        <begin position="87"/>
        <end position="90"/>
    </location>
</feature>
<feature type="helix" evidence="8">
    <location>
        <begin position="100"/>
        <end position="102"/>
    </location>
</feature>
<feature type="helix" evidence="8">
    <location>
        <begin position="105"/>
        <end position="115"/>
    </location>
</feature>
<feature type="helix" evidence="8">
    <location>
        <begin position="117"/>
        <end position="132"/>
    </location>
</feature>
<feature type="strand" evidence="8">
    <location>
        <begin position="137"/>
        <end position="141"/>
    </location>
</feature>
<feature type="helix" evidence="8">
    <location>
        <begin position="144"/>
        <end position="148"/>
    </location>
</feature>
<feature type="helix" evidence="8">
    <location>
        <begin position="154"/>
        <end position="174"/>
    </location>
</feature>
<feature type="helix" evidence="8">
    <location>
        <begin position="175"/>
        <end position="177"/>
    </location>
</feature>
<feature type="strand" evidence="8">
    <location>
        <begin position="180"/>
        <end position="186"/>
    </location>
</feature>
<feature type="helix" evidence="8">
    <location>
        <begin position="203"/>
        <end position="205"/>
    </location>
</feature>
<feature type="helix" evidence="8">
    <location>
        <begin position="214"/>
        <end position="226"/>
    </location>
</feature>
<feature type="helix" evidence="8">
    <location>
        <begin position="228"/>
        <end position="232"/>
    </location>
</feature>
<feature type="strand" evidence="8">
    <location>
        <begin position="237"/>
        <end position="241"/>
    </location>
</feature>
<name>FABG_SYNY3</name>
<protein>
    <recommendedName>
        <fullName evidence="4">3-oxoacyl-[acyl-carrier-protein] reductase</fullName>
        <ecNumber evidence="6">1.1.1.100</ecNumber>
    </recommendedName>
    <alternativeName>
        <fullName>3-ketoacyl-acyl carrier protein reductase</fullName>
    </alternativeName>
</protein>
<gene>
    <name type="primary">fabG</name>
    <name type="ordered locus">slr0886</name>
</gene>
<dbReference type="EC" id="1.1.1.100" evidence="6"/>
<dbReference type="EMBL" id="BA000022">
    <property type="protein sequence ID" value="BAA17614.1"/>
    <property type="molecule type" value="Genomic_DNA"/>
</dbReference>
<dbReference type="PIR" id="S77280">
    <property type="entry name" value="S77280"/>
</dbReference>
<dbReference type="PDB" id="4RZH">
    <property type="method" value="X-ray"/>
    <property type="resolution" value="2.20 A"/>
    <property type="chains" value="A/B=1-247"/>
</dbReference>
<dbReference type="PDBsum" id="4RZH"/>
<dbReference type="SMR" id="P73574"/>
<dbReference type="FunCoup" id="P73574">
    <property type="interactions" value="475"/>
</dbReference>
<dbReference type="IntAct" id="P73574">
    <property type="interactions" value="1"/>
</dbReference>
<dbReference type="STRING" id="1148.gene:10498481"/>
<dbReference type="PaxDb" id="1148-1652694"/>
<dbReference type="EnsemblBacteria" id="BAA17614">
    <property type="protein sequence ID" value="BAA17614"/>
    <property type="gene ID" value="BAA17614"/>
</dbReference>
<dbReference type="KEGG" id="syn:slr0886"/>
<dbReference type="eggNOG" id="COG1028">
    <property type="taxonomic scope" value="Bacteria"/>
</dbReference>
<dbReference type="InParanoid" id="P73574"/>
<dbReference type="PhylomeDB" id="P73574"/>
<dbReference type="UniPathway" id="UPA00094"/>
<dbReference type="EvolutionaryTrace" id="P73574"/>
<dbReference type="Proteomes" id="UP000001425">
    <property type="component" value="Chromosome"/>
</dbReference>
<dbReference type="GO" id="GO:0004316">
    <property type="term" value="F:3-oxoacyl-[acyl-carrier-protein] reductase (NADPH) activity"/>
    <property type="evidence" value="ECO:0007669"/>
    <property type="project" value="UniProtKB-EC"/>
</dbReference>
<dbReference type="GO" id="GO:0051287">
    <property type="term" value="F:NAD binding"/>
    <property type="evidence" value="ECO:0007669"/>
    <property type="project" value="InterPro"/>
</dbReference>
<dbReference type="GO" id="GO:0016616">
    <property type="term" value="F:oxidoreductase activity, acting on the CH-OH group of donors, NAD or NADP as acceptor"/>
    <property type="evidence" value="ECO:0000318"/>
    <property type="project" value="GO_Central"/>
</dbReference>
<dbReference type="GO" id="GO:0030497">
    <property type="term" value="P:fatty acid elongation"/>
    <property type="evidence" value="ECO:0000318"/>
    <property type="project" value="GO_Central"/>
</dbReference>
<dbReference type="CDD" id="cd05333">
    <property type="entry name" value="BKR_SDR_c"/>
    <property type="match status" value="1"/>
</dbReference>
<dbReference type="FunFam" id="3.40.50.720:FF:000037">
    <property type="entry name" value="3-oxoacyl-[acyl-carrier-protein] reductase FabG"/>
    <property type="match status" value="1"/>
</dbReference>
<dbReference type="Gene3D" id="3.40.50.720">
    <property type="entry name" value="NAD(P)-binding Rossmann-like Domain"/>
    <property type="match status" value="1"/>
</dbReference>
<dbReference type="InterPro" id="IPR011284">
    <property type="entry name" value="3oxo_ACP_reduc"/>
</dbReference>
<dbReference type="InterPro" id="IPR036291">
    <property type="entry name" value="NAD(P)-bd_dom_sf"/>
</dbReference>
<dbReference type="InterPro" id="IPR020904">
    <property type="entry name" value="Sc_DH/Rdtase_CS"/>
</dbReference>
<dbReference type="InterPro" id="IPR050259">
    <property type="entry name" value="SDR"/>
</dbReference>
<dbReference type="InterPro" id="IPR002347">
    <property type="entry name" value="SDR_fam"/>
</dbReference>
<dbReference type="NCBIfam" id="TIGR01830">
    <property type="entry name" value="3oxo_ACP_reduc"/>
    <property type="match status" value="1"/>
</dbReference>
<dbReference type="NCBIfam" id="NF005559">
    <property type="entry name" value="PRK07231.1"/>
    <property type="match status" value="1"/>
</dbReference>
<dbReference type="NCBIfam" id="NF009466">
    <property type="entry name" value="PRK12826.1-2"/>
    <property type="match status" value="1"/>
</dbReference>
<dbReference type="PANTHER" id="PTHR42879">
    <property type="entry name" value="3-OXOACYL-(ACYL-CARRIER-PROTEIN) REDUCTASE"/>
    <property type="match status" value="1"/>
</dbReference>
<dbReference type="PANTHER" id="PTHR42879:SF2">
    <property type="entry name" value="3-OXOACYL-[ACYL-CARRIER-PROTEIN] REDUCTASE FABG"/>
    <property type="match status" value="1"/>
</dbReference>
<dbReference type="Pfam" id="PF00106">
    <property type="entry name" value="adh_short"/>
    <property type="match status" value="1"/>
</dbReference>
<dbReference type="PRINTS" id="PR00081">
    <property type="entry name" value="GDHRDH"/>
</dbReference>
<dbReference type="PRINTS" id="PR00080">
    <property type="entry name" value="SDRFAMILY"/>
</dbReference>
<dbReference type="SMART" id="SM00822">
    <property type="entry name" value="PKS_KR"/>
    <property type="match status" value="1"/>
</dbReference>
<dbReference type="SUPFAM" id="SSF51735">
    <property type="entry name" value="NAD(P)-binding Rossmann-fold domains"/>
    <property type="match status" value="1"/>
</dbReference>
<dbReference type="PROSITE" id="PS00061">
    <property type="entry name" value="ADH_SHORT"/>
    <property type="match status" value="1"/>
</dbReference>
<comment type="function">
    <text evidence="3 6">Catalyzes the NADPH-dependent reduction of beta-ketoacyl-ACP substrates to beta-hydroxyacyl-ACP products, the first reductive step in the elongation cycle of fatty acid biosynthesis (Probable). Is capable of reducing acetoacetyl-CoA, but less well than its paralog PhaB (PubMed:26358291).</text>
</comment>
<comment type="catalytic activity">
    <reaction evidence="6">
        <text>a (3R)-hydroxyacyl-[ACP] + NADP(+) = a 3-oxoacyl-[ACP] + NADPH + H(+)</text>
        <dbReference type="Rhea" id="RHEA:17397"/>
        <dbReference type="Rhea" id="RHEA-COMP:9916"/>
        <dbReference type="Rhea" id="RHEA-COMP:9945"/>
        <dbReference type="ChEBI" id="CHEBI:15378"/>
        <dbReference type="ChEBI" id="CHEBI:57783"/>
        <dbReference type="ChEBI" id="CHEBI:58349"/>
        <dbReference type="ChEBI" id="CHEBI:78776"/>
        <dbReference type="ChEBI" id="CHEBI:78827"/>
        <dbReference type="EC" id="1.1.1.100"/>
    </reaction>
</comment>
<comment type="pathway">
    <text>Lipid metabolism; fatty acid biosynthesis.</text>
</comment>
<comment type="biotechnology">
    <text evidence="3">Mutation of key residues to match those found in its paralog PhaB increases its activity on acetoacetyl-CoA, not its usual substrate, which might help shift cellular metabolism to make poly(3-hydroxybutyrate) (PHB), a compound that has potential uses as a renewable, biodegradable thermoplastic (PubMed:26358291). Poly(3-hydroxyalkanoic acids) (PHA), of which PHB is among the most common compounds, are prokaryotic intracellular storage compounds with potential uses as a renewable, biodegradable thermoplastic. Cyanobacterial PHB synthesis is particularly attractive as cyanobacteria use CO(2) as the carbon source.</text>
</comment>
<comment type="similarity">
    <text evidence="5">Belongs to the short-chain dehydrogenases/reductases (SDR) family.</text>
</comment>
<organism>
    <name type="scientific">Synechocystis sp. (strain ATCC 27184 / PCC 6803 / Kazusa)</name>
    <dbReference type="NCBI Taxonomy" id="1111708"/>
    <lineage>
        <taxon>Bacteria</taxon>
        <taxon>Bacillati</taxon>
        <taxon>Cyanobacteriota</taxon>
        <taxon>Cyanophyceae</taxon>
        <taxon>Synechococcales</taxon>
        <taxon>Merismopediaceae</taxon>
        <taxon>Synechocystis</taxon>
    </lineage>
</organism>
<accession>P73574</accession>
<keyword id="KW-0002">3D-structure</keyword>
<keyword id="KW-0275">Fatty acid biosynthesis</keyword>
<keyword id="KW-0276">Fatty acid metabolism</keyword>
<keyword id="KW-0444">Lipid biosynthesis</keyword>
<keyword id="KW-0443">Lipid metabolism</keyword>
<keyword id="KW-0521">NADP</keyword>
<keyword id="KW-0560">Oxidoreductase</keyword>
<keyword id="KW-1185">Reference proteome</keyword>